<feature type="chain" id="PRO_0000372943" description="Nucleoprotein">
    <location>
        <begin position="1"/>
        <end position="498"/>
    </location>
</feature>
<feature type="region of interest" description="Disordered" evidence="2">
    <location>
        <begin position="1"/>
        <end position="21"/>
    </location>
</feature>
<feature type="short sequence motif" description="Unconventional nuclear localization signal" evidence="1">
    <location>
        <begin position="1"/>
        <end position="18"/>
    </location>
</feature>
<feature type="short sequence motif" description="Bipartite nuclear localization signal" evidence="1">
    <location>
        <begin position="198"/>
        <end position="216"/>
    </location>
</feature>
<feature type="compositionally biased region" description="Basic and acidic residues" evidence="2">
    <location>
        <begin position="8"/>
        <end position="21"/>
    </location>
</feature>
<comment type="function">
    <text evidence="1">Encapsidates the negative strand viral RNA, protecting it from nucleases. The encapsidated genomic RNA is termed the ribonucleoprotein (RNP) and serves as template for transcription and replication. The RNP needs to be localized in the host nucleus to start an infectious cycle, but is too large to diffuse through the nuclear pore complex. NP comprises at least 2 nuclear localization signals that are responsible for the active RNP import into the nucleus through cellular importin alpha/beta pathway. Later in the infection, nclear export of RNPs are mediated through viral proteins NEP interacting with M1 which binds nucleoproteins. It is possible that nucleoprotein binds directly host exportin-1/XPO1 and plays an active role in RNPs nuclear export. M1 interaction with RNP seems to hide nucleoprotein's nuclear localization signals. Soon after a virion infects a new cell, M1 dissociates from the RNP under acidification of the virion driven by M2 protein. Dissociation of M1 from RNP unmasks nucleoprotein's nuclear localization signals, targeting the RNP to the nucleus.</text>
</comment>
<comment type="subunit">
    <text evidence="1">Homomultimerizes to form the nucleocapsid. May bind host exportin-1/XPO1. Binds to viral genomic RNA. Protein-RNA contacts are mediated by a combination of electrostatic interactions between positively charged residues and the phosphate backbone and planar interactions between aromatic side chains and bases.</text>
</comment>
<comment type="subcellular location">
    <subcellularLocation>
        <location evidence="1">Virion</location>
    </subcellularLocation>
    <subcellularLocation>
        <location evidence="1">Host nucleus</location>
    </subcellularLocation>
</comment>
<comment type="PTM">
    <text evidence="1">Late in virus-infected cells, may be cleaved from a 56-kDa protein to a 53-kDa protein by a cellular caspase. This cleavage might be a marker for the onset of apoptosis in infected cells or have a specific function in virus host interaction.</text>
</comment>
<comment type="similarity">
    <text evidence="1">Belongs to the influenza viruses nucleoprotein family.</text>
</comment>
<organism>
    <name type="scientific">Influenza A virus (strain A/USA:Memphis/10/1996 H1N1)</name>
    <dbReference type="NCBI Taxonomy" id="416730"/>
    <lineage>
        <taxon>Viruses</taxon>
        <taxon>Riboviria</taxon>
        <taxon>Orthornavirae</taxon>
        <taxon>Negarnaviricota</taxon>
        <taxon>Polyploviricotina</taxon>
        <taxon>Insthoviricetes</taxon>
        <taxon>Articulavirales</taxon>
        <taxon>Orthomyxoviridae</taxon>
        <taxon>Alphainfluenzavirus</taxon>
        <taxon>Alphainfluenzavirus influenzae</taxon>
        <taxon>Influenza A virus</taxon>
    </lineage>
</organism>
<proteinExistence type="inferred from homology"/>
<gene>
    <name evidence="1" type="primary">NP</name>
</gene>
<name>NCAP_I96A2</name>
<keyword id="KW-0167">Capsid protein</keyword>
<keyword id="KW-1139">Helical capsid protein</keyword>
<keyword id="KW-1048">Host nucleus</keyword>
<keyword id="KW-0945">Host-virus interaction</keyword>
<keyword id="KW-0687">Ribonucleoprotein</keyword>
<keyword id="KW-0694">RNA-binding</keyword>
<keyword id="KW-0543">Viral nucleoprotein</keyword>
<keyword id="KW-1163">Viral penetration into host nucleus</keyword>
<keyword id="KW-0946">Virion</keyword>
<keyword id="KW-1160">Virus entry into host cell</keyword>
<organismHost>
    <name type="scientific">Aves</name>
    <dbReference type="NCBI Taxonomy" id="8782"/>
</organismHost>
<organismHost>
    <name type="scientific">Homo sapiens</name>
    <name type="common">Human</name>
    <dbReference type="NCBI Taxonomy" id="9606"/>
</organismHost>
<organismHost>
    <name type="scientific">Sus scrofa</name>
    <name type="common">Pig</name>
    <dbReference type="NCBI Taxonomy" id="9823"/>
</organismHost>
<sequence length="498" mass="55997">MASQGTKRSYEQMETDGERQNATEIRASVGKMIGGIGRFYIQMCTELKLNDYEGRLIQNSLTIERMVLSAFDERRNKYLEEHPSAGKDPKKTGGPIYKRVDGKWVRELVLYDKEEIRRIWRQANNGDDATAGLTHIMIWHSNLNDTTYQRTRALVRTGMDPRMCSLMQGSTLPRRSGAAGAAVKGVGTMVLELIRMIKRGINDRNFWRGENGRKTRIAYERMCNILKGKFQTAAQRAMMDQVRESRNPGNAEIEDLTFLARSALILRGSVAHKSCLPACVYGPAVASGYDFEKEGYSLVGIDPFKLLQTSQVYSLIRPNENPAHKSQLVWMACNSAAFEDLRVSSFIRGTRVLPRGKLSTRGVQIASNENMDSIVSSTLELRSRYWAIRTRSGGNTNQQRASAGQISIQPTFSVQRNLPFDKTTIMAAFTGNAEGRTSDMRAEIIKMMESARPEEVSFQGRGVFELSDERATNPIVPSFDMSNEGSYFFGDNAEEYDN</sequence>
<dbReference type="EMBL" id="CY019798">
    <property type="protein sequence ID" value="ABN50966.1"/>
    <property type="molecule type" value="Viral_cRNA"/>
</dbReference>
<dbReference type="SMR" id="A3DRP4"/>
<dbReference type="PRO" id="PR:A3DRP4"/>
<dbReference type="Proteomes" id="UP000007557">
    <property type="component" value="Genome"/>
</dbReference>
<dbReference type="GO" id="GO:0019029">
    <property type="term" value="C:helical viral capsid"/>
    <property type="evidence" value="ECO:0007669"/>
    <property type="project" value="UniProtKB-UniRule"/>
</dbReference>
<dbReference type="GO" id="GO:0043657">
    <property type="term" value="C:host cell"/>
    <property type="evidence" value="ECO:0007669"/>
    <property type="project" value="GOC"/>
</dbReference>
<dbReference type="GO" id="GO:0042025">
    <property type="term" value="C:host cell nucleus"/>
    <property type="evidence" value="ECO:0007669"/>
    <property type="project" value="UniProtKB-SubCell"/>
</dbReference>
<dbReference type="GO" id="GO:1990904">
    <property type="term" value="C:ribonucleoprotein complex"/>
    <property type="evidence" value="ECO:0007669"/>
    <property type="project" value="UniProtKB-KW"/>
</dbReference>
<dbReference type="GO" id="GO:0019013">
    <property type="term" value="C:viral nucleocapsid"/>
    <property type="evidence" value="ECO:0007669"/>
    <property type="project" value="UniProtKB-UniRule"/>
</dbReference>
<dbReference type="GO" id="GO:0003723">
    <property type="term" value="F:RNA binding"/>
    <property type="evidence" value="ECO:0007669"/>
    <property type="project" value="UniProtKB-UniRule"/>
</dbReference>
<dbReference type="GO" id="GO:0005198">
    <property type="term" value="F:structural molecule activity"/>
    <property type="evidence" value="ECO:0007669"/>
    <property type="project" value="UniProtKB-UniRule"/>
</dbReference>
<dbReference type="GO" id="GO:0046718">
    <property type="term" value="P:symbiont entry into host cell"/>
    <property type="evidence" value="ECO:0007669"/>
    <property type="project" value="UniProtKB-KW"/>
</dbReference>
<dbReference type="GO" id="GO:0075732">
    <property type="term" value="P:viral penetration into host nucleus"/>
    <property type="evidence" value="ECO:0007669"/>
    <property type="project" value="UniProtKB-UniRule"/>
</dbReference>
<dbReference type="HAMAP" id="MF_04070">
    <property type="entry name" value="INFV_NCAP"/>
    <property type="match status" value="1"/>
</dbReference>
<dbReference type="InterPro" id="IPR002141">
    <property type="entry name" value="Flu_NP"/>
</dbReference>
<dbReference type="Pfam" id="PF00506">
    <property type="entry name" value="Flu_NP"/>
    <property type="match status" value="1"/>
</dbReference>
<dbReference type="SUPFAM" id="SSF161003">
    <property type="entry name" value="flu NP-like"/>
    <property type="match status" value="1"/>
</dbReference>
<accession>A3DRP4</accession>
<protein>
    <recommendedName>
        <fullName evidence="1">Nucleoprotein</fullName>
    </recommendedName>
    <alternativeName>
        <fullName evidence="1">Nucleocapsid protein</fullName>
        <shortName evidence="1">Protein N</shortName>
    </alternativeName>
</protein>
<evidence type="ECO:0000255" key="1">
    <source>
        <dbReference type="HAMAP-Rule" id="MF_04070"/>
    </source>
</evidence>
<evidence type="ECO:0000256" key="2">
    <source>
        <dbReference type="SAM" id="MobiDB-lite"/>
    </source>
</evidence>
<reference key="1">
    <citation type="submission" date="2007-02" db="EMBL/GenBank/DDBJ databases">
        <title>The NIAID influenza genome sequencing project.</title>
        <authorList>
            <person name="Ghedin E."/>
            <person name="Spiro D."/>
            <person name="Miller N."/>
            <person name="Zaborsky J."/>
            <person name="Feldblyum T."/>
            <person name="Subbu V."/>
            <person name="Shumway M."/>
            <person name="Sparenborg J."/>
            <person name="Groveman L."/>
            <person name="Halpin R."/>
            <person name="Sitz J."/>
            <person name="Koo H."/>
            <person name="Salzberg S.L."/>
            <person name="Webster R.G."/>
            <person name="Hoffmann E."/>
            <person name="Krauss S."/>
            <person name="Naeve C."/>
            <person name="Bao Y."/>
            <person name="Bolotov P."/>
            <person name="Dernovoy D."/>
            <person name="Kiryutin B."/>
            <person name="Lipman D.J."/>
            <person name="Tatusova T."/>
        </authorList>
    </citation>
    <scope>NUCLEOTIDE SEQUENCE [GENOMIC RNA]</scope>
</reference>
<reference key="2">
    <citation type="submission" date="2007-02" db="EMBL/GenBank/DDBJ databases">
        <authorList>
            <consortium name="The NIAID Influenza Genome Sequencing Consortium"/>
        </authorList>
    </citation>
    <scope>NUCLEOTIDE SEQUENCE [GENOMIC RNA]</scope>
</reference>